<sequence>MQFQLTLFLHLGWLSYSKAQDDCNRGACHPTTGDLLVGRNTQLMASSTCGLSRAQKYCILSYLEGEQKCFICDSRFPYDPYDQPNSHTIENVIVSFEPDREKKWWQSENGLDHVSIRLDLEALFRFSHLILTFKTFRPAAMLVERSTDYGHNWKVFKYFAKDCATSFPNITSGQAQGVGDIVCDSKYSDIEPSTGGEVVLKVLDPSFEIENPYSPYIQDLVTLTNLRINFTKLHTLGDALLGRRQNDSLDKYYYALYEMIVRGSCFCNGHASECRPMQKMRGDVFSPPGMVHGQCVCQHNTDGPNCERCKDFFQDAPWRPAADLQDNACRSCSCNSHSSRCHFDMTTYLASGGLSGGVCEDCQHNTEGQHCDRCRPLFYRDPLKTISDPYACIPCECDPDGTISGGICVSHSDPALGSVAGQCLCKENVEGAKCDQCKPNHYGLSATDPLGCQPCDCNPLGSLPFLTCDVDTGQCLCLSYVTGAHCEECTVGYWGLGNHLHGCSPCDCDIGGAYSNVCSPKNGQCECRPHVTGRSCSEPAPGYFFAPLNFYLYEAEEATTLQGLAPLGSETFGQSPAVHVVLGEPVPGNPVTWTGPGFARVLPGAGLRFAVNNIPFPVDFTIAIHYETQSAADWTVQIVVNPPGGSEHCIPKTLQSKPQSFALPAATRIMLLPTPICLEPDVQYSIDVYFSQPLQGESHAHSHVLVDSLGLIPQINSLENFCSKQDLDEYQLHNCVEIASAMGPQVLPGACERLIISMSAKLHDGAVACKCHPQGSVGSSCSRLGGQCQCKPLVVGRCCDRCSTGSYDLGHHGCHPCHCHPQGSKDTVCDQVTGQCPCHGEVSGRRCDRCLAGYFGFPSCHPCPCNRFAELCDPETGSCFNCGGFTTGRNCERCIDGYYGNPSSGQPCRPCLCPDDPSSNQYFAHSCYQNLWSSDVICNCLQGYTGTQCGECSTGFYGNPRISGAPCQPCACNNNIDVTDPESCSRVTGECLRCLHNTQGANCQLCKPGHYGSALNQTCRRCSCHASGVSPMECPPGGGACLCDPVTGACPCLPNVTGLACDRCADGYWNLVPGRGCQSCDCDPRTSQSSHCDQLTGQCPCKLGYGGKRCSECQENYYGDPPGRCIPCDCNRAGTQKPICDPDTGMCRCREGVSGQRCDRCARGHSQEFPTCLQCHLCFDQWDHTISSLSKAVQGLMRLAANMEDKRETLPVCEADFKDLRGNVSEIERILKHPVFPSGKFLKVKDYHDSVRRQIMQLNEQLKAVYEFQDLKDTIERAKNEADLLLEDLQEEIDLQSSVLNASIADSSENIKKYYHISSSAEKKINETSSTINTSANTRNDLLTILDTLTSKGNLSLERLKQIKIPDIQILNEKVCGDPGNVPCVPLPCGGALCTGRKGHRKCRGPGCHGSLTLSTNALQKAQEAKSIIRNLDKQVRGLKNQIESISEQAEVSKNNALQLREKLGNIRNQSDSEEENINLFIKKVKNFLLEENVPPEDIEKVANGVLDIHLPIPSQNLTDELVKIQKHMQLCEDYRTDENRLNEEADGAQKLLVKAKAAEKAANILLNLDKTLNQLQQAQITQGRANSTITQLTANITKIKKNVLQAENQTREMKSELELAKQRSGLEDGLSLLQTKLQRHQDHAVNAKVQAESAQHQAGSLEKEFVELKKQYAILQRKTSTTGLTKETLGKVKQLKDAAEKLAGDTEAKIRRITDLERKIQDLNLSRQAKADQLRILEDQVVAIKNEIVEQEKKYARCYS</sequence>
<protein>
    <recommendedName>
        <fullName>Laminin subunit beta-4</fullName>
    </recommendedName>
    <alternativeName>
        <fullName>Laminin beta-1-related protein</fullName>
    </alternativeName>
</protein>
<organism>
    <name type="scientific">Homo sapiens</name>
    <name type="common">Human</name>
    <dbReference type="NCBI Taxonomy" id="9606"/>
    <lineage>
        <taxon>Eukaryota</taxon>
        <taxon>Metazoa</taxon>
        <taxon>Chordata</taxon>
        <taxon>Craniata</taxon>
        <taxon>Vertebrata</taxon>
        <taxon>Euteleostomi</taxon>
        <taxon>Mammalia</taxon>
        <taxon>Eutheria</taxon>
        <taxon>Euarchontoglires</taxon>
        <taxon>Primates</taxon>
        <taxon>Haplorrhini</taxon>
        <taxon>Catarrhini</taxon>
        <taxon>Hominidae</taxon>
        <taxon>Homo</taxon>
    </lineage>
</organism>
<name>LAMB4_HUMAN</name>
<keyword id="KW-0025">Alternative splicing</keyword>
<keyword id="KW-0084">Basement membrane</keyword>
<keyword id="KW-0130">Cell adhesion</keyword>
<keyword id="KW-0175">Coiled coil</keyword>
<keyword id="KW-1015">Disulfide bond</keyword>
<keyword id="KW-0272">Extracellular matrix</keyword>
<keyword id="KW-0325">Glycoprotein</keyword>
<keyword id="KW-0424">Laminin EGF-like domain</keyword>
<keyword id="KW-1267">Proteomics identification</keyword>
<keyword id="KW-1185">Reference proteome</keyword>
<keyword id="KW-0677">Repeat</keyword>
<keyword id="KW-0964">Secreted</keyword>
<keyword id="KW-0732">Signal</keyword>
<proteinExistence type="evidence at protein level"/>
<feature type="signal peptide" evidence="1">
    <location>
        <begin position="1"/>
        <end position="19"/>
    </location>
</feature>
<feature type="chain" id="PRO_0000312857" description="Laminin subunit beta-4">
    <location>
        <begin position="20"/>
        <end position="1761"/>
    </location>
</feature>
<feature type="domain" description="Laminin N-terminal" evidence="4">
    <location>
        <begin position="24"/>
        <end position="264"/>
    </location>
</feature>
<feature type="domain" description="Laminin EGF-like 1" evidence="2">
    <location>
        <begin position="265"/>
        <end position="331"/>
    </location>
</feature>
<feature type="domain" description="Laminin EGF-like 2" evidence="2">
    <location>
        <begin position="332"/>
        <end position="394"/>
    </location>
</feature>
<feature type="domain" description="Laminin EGF-like 3" evidence="2">
    <location>
        <begin position="395"/>
        <end position="454"/>
    </location>
</feature>
<feature type="domain" description="Laminin EGF-like 4" evidence="2">
    <location>
        <begin position="455"/>
        <end position="505"/>
    </location>
</feature>
<feature type="domain" description="Laminin EGF-like 5; truncated" evidence="2">
    <location>
        <begin position="506"/>
        <end position="552"/>
    </location>
</feature>
<feature type="domain" description="Laminin IV type B" evidence="3">
    <location>
        <begin position="545"/>
        <end position="763"/>
    </location>
</feature>
<feature type="domain" description="Laminin EGF-like 6" evidence="2">
    <location>
        <begin position="769"/>
        <end position="816"/>
    </location>
</feature>
<feature type="domain" description="Laminin EGF-like 7" evidence="2">
    <location>
        <begin position="817"/>
        <end position="862"/>
    </location>
</feature>
<feature type="domain" description="Laminin EGF-like 8" evidence="2">
    <location>
        <begin position="863"/>
        <end position="910"/>
    </location>
</feature>
<feature type="domain" description="Laminin EGF-like 9" evidence="2">
    <location>
        <begin position="911"/>
        <end position="969"/>
    </location>
</feature>
<feature type="domain" description="Laminin EGF-like 10" evidence="2">
    <location>
        <begin position="970"/>
        <end position="1021"/>
    </location>
</feature>
<feature type="domain" description="Laminin EGF-like 11" evidence="2">
    <location>
        <begin position="1022"/>
        <end position="1079"/>
    </location>
</feature>
<feature type="domain" description="Laminin EGF-like 12" evidence="2">
    <location>
        <begin position="1080"/>
        <end position="1127"/>
    </location>
</feature>
<feature type="domain" description="Laminin EGF-like 13" evidence="2">
    <location>
        <begin position="1128"/>
        <end position="1174"/>
    </location>
</feature>
<feature type="region of interest" description="Domain II">
    <location>
        <begin position="1175"/>
        <end position="1375"/>
    </location>
</feature>
<feature type="region of interest" description="Domain alpha">
    <location>
        <begin position="1376"/>
        <end position="1408"/>
    </location>
</feature>
<feature type="region of interest" description="Domain I">
    <location>
        <begin position="1409"/>
        <end position="1761"/>
    </location>
</feature>
<feature type="coiled-coil region" evidence="1">
    <location>
        <begin position="1243"/>
        <end position="1301"/>
    </location>
</feature>
<feature type="coiled-coil region" evidence="1">
    <location>
        <begin position="1416"/>
        <end position="1480"/>
    </location>
</feature>
<feature type="coiled-coil region" evidence="1">
    <location>
        <begin position="1525"/>
        <end position="1759"/>
    </location>
</feature>
<feature type="glycosylation site" description="N-linked (GlcNAc...) asparagine" evidence="1">
    <location>
        <position position="169"/>
    </location>
</feature>
<feature type="glycosylation site" description="N-linked (GlcNAc...) asparagine" evidence="1">
    <location>
        <position position="229"/>
    </location>
</feature>
<feature type="glycosylation site" description="N-linked (GlcNAc...) asparagine" evidence="1">
    <location>
        <position position="246"/>
    </location>
</feature>
<feature type="glycosylation site" description="N-linked (GlcNAc...) asparagine" evidence="1">
    <location>
        <position position="1016"/>
    </location>
</feature>
<feature type="glycosylation site" description="N-linked (GlcNAc...) asparagine" evidence="1">
    <location>
        <position position="1055"/>
    </location>
</feature>
<feature type="glycosylation site" description="N-linked (GlcNAc...) asparagine" evidence="1">
    <location>
        <position position="1223"/>
    </location>
</feature>
<feature type="glycosylation site" description="N-linked (GlcNAc...) asparagine" evidence="1">
    <location>
        <position position="1301"/>
    </location>
</feature>
<feature type="glycosylation site" description="N-linked (GlcNAc...) asparagine" evidence="1">
    <location>
        <position position="1326"/>
    </location>
</feature>
<feature type="glycosylation site" description="N-linked (GlcNAc...) asparagine" evidence="1">
    <location>
        <position position="1333"/>
    </location>
</feature>
<feature type="glycosylation site" description="N-linked (GlcNAc...) asparagine" evidence="1">
    <location>
        <position position="1354"/>
    </location>
</feature>
<feature type="glycosylation site" description="N-linked (GlcNAc...) asparagine" evidence="1">
    <location>
        <position position="1469"/>
    </location>
</feature>
<feature type="glycosylation site" description="N-linked (GlcNAc...) asparagine" evidence="1">
    <location>
        <position position="1517"/>
    </location>
</feature>
<feature type="glycosylation site" description="N-linked (GlcNAc...) asparagine" evidence="1">
    <location>
        <position position="1587"/>
    </location>
</feature>
<feature type="glycosylation site" description="N-linked (GlcNAc...) asparagine" evidence="1">
    <location>
        <position position="1596"/>
    </location>
</feature>
<feature type="glycosylation site" description="N-linked (GlcNAc...) asparagine" evidence="1">
    <location>
        <position position="1609"/>
    </location>
</feature>
<feature type="glycosylation site" description="N-linked (GlcNAc...) asparagine" evidence="1">
    <location>
        <position position="1725"/>
    </location>
</feature>
<feature type="disulfide bond" evidence="2">
    <location>
        <begin position="265"/>
        <end position="274" status="uncertain"/>
    </location>
</feature>
<feature type="disulfide bond" evidence="2">
    <location>
        <begin position="267"/>
        <end position="295"/>
    </location>
</feature>
<feature type="disulfide bond" evidence="2">
    <location>
        <begin position="297"/>
        <end position="306"/>
    </location>
</feature>
<feature type="disulfide bond" evidence="2">
    <location>
        <begin position="309"/>
        <end position="329"/>
    </location>
</feature>
<feature type="disulfide bond" evidence="2">
    <location>
        <begin position="332"/>
        <end position="341"/>
    </location>
</feature>
<feature type="disulfide bond" evidence="2">
    <location>
        <begin position="334"/>
        <end position="359"/>
    </location>
</feature>
<feature type="disulfide bond" evidence="2">
    <location>
        <begin position="362"/>
        <end position="371"/>
    </location>
</feature>
<feature type="disulfide bond" evidence="2">
    <location>
        <begin position="374"/>
        <end position="392"/>
    </location>
</feature>
<feature type="disulfide bond" evidence="2">
    <location>
        <begin position="395"/>
        <end position="408"/>
    </location>
</feature>
<feature type="disulfide bond" evidence="2">
    <location>
        <begin position="397"/>
        <end position="423"/>
    </location>
</feature>
<feature type="disulfide bond" evidence="2">
    <location>
        <begin position="425"/>
        <end position="434"/>
    </location>
</feature>
<feature type="disulfide bond" evidence="2">
    <location>
        <begin position="437"/>
        <end position="452"/>
    </location>
</feature>
<feature type="disulfide bond" evidence="2">
    <location>
        <begin position="455"/>
        <end position="468"/>
    </location>
</feature>
<feature type="disulfide bond" evidence="2">
    <location>
        <begin position="457"/>
        <end position="475"/>
    </location>
</feature>
<feature type="disulfide bond" evidence="2">
    <location>
        <begin position="477"/>
        <end position="486"/>
    </location>
</feature>
<feature type="disulfide bond" evidence="2">
    <location>
        <begin position="489"/>
        <end position="503"/>
    </location>
</feature>
<feature type="disulfide bond" evidence="2">
    <location>
        <begin position="506"/>
        <end position="518"/>
    </location>
</feature>
<feature type="disulfide bond" evidence="2">
    <location>
        <begin position="508"/>
        <end position="525"/>
    </location>
</feature>
<feature type="disulfide bond" evidence="2">
    <location>
        <begin position="527"/>
        <end position="536"/>
    </location>
</feature>
<feature type="disulfide bond" evidence="2">
    <location>
        <begin position="769"/>
        <end position="781"/>
    </location>
</feature>
<feature type="disulfide bond" evidence="2">
    <location>
        <begin position="771"/>
        <end position="788"/>
    </location>
</feature>
<feature type="disulfide bond" evidence="2">
    <location>
        <begin position="790"/>
        <end position="799"/>
    </location>
</feature>
<feature type="disulfide bond" evidence="2">
    <location>
        <begin position="802"/>
        <end position="814"/>
    </location>
</feature>
<feature type="disulfide bond" evidence="2">
    <location>
        <begin position="817"/>
        <end position="829"/>
    </location>
</feature>
<feature type="disulfide bond" evidence="2">
    <location>
        <begin position="819"/>
        <end position="836"/>
    </location>
</feature>
<feature type="disulfide bond" evidence="2">
    <location>
        <begin position="838"/>
        <end position="847"/>
    </location>
</feature>
<feature type="disulfide bond" evidence="2">
    <location>
        <begin position="850"/>
        <end position="860"/>
    </location>
</feature>
<feature type="disulfide bond" evidence="2">
    <location>
        <begin position="863"/>
        <end position="872"/>
    </location>
</feature>
<feature type="disulfide bond" evidence="2">
    <location>
        <begin position="865"/>
        <end position="879"/>
    </location>
</feature>
<feature type="disulfide bond" evidence="2">
    <location>
        <begin position="882"/>
        <end position="891"/>
    </location>
</feature>
<feature type="disulfide bond" evidence="2">
    <location>
        <begin position="894"/>
        <end position="908"/>
    </location>
</feature>
<feature type="disulfide bond" evidence="2">
    <location>
        <begin position="913"/>
        <end position="938"/>
    </location>
</feature>
<feature type="disulfide bond" evidence="2">
    <location>
        <begin position="940"/>
        <end position="949"/>
    </location>
</feature>
<feature type="disulfide bond" evidence="2">
    <location>
        <begin position="952"/>
        <end position="967"/>
    </location>
</feature>
<feature type="disulfide bond" evidence="2">
    <location>
        <begin position="970"/>
        <end position="984"/>
    </location>
</feature>
<feature type="disulfide bond" evidence="2">
    <location>
        <begin position="972"/>
        <end position="991"/>
    </location>
</feature>
<feature type="disulfide bond" evidence="2">
    <location>
        <begin position="994"/>
        <end position="1003"/>
    </location>
</feature>
<feature type="disulfide bond" evidence="2">
    <location>
        <begin position="1006"/>
        <end position="1019"/>
    </location>
</feature>
<feature type="disulfide bond" evidence="2">
    <location>
        <begin position="1022"/>
        <end position="1043"/>
    </location>
</feature>
<feature type="disulfide bond" evidence="2">
    <location>
        <begin position="1024"/>
        <end position="1050"/>
    </location>
</feature>
<feature type="disulfide bond" evidence="2">
    <location>
        <begin position="1052"/>
        <end position="1061"/>
    </location>
</feature>
<feature type="disulfide bond" evidence="2">
    <location>
        <begin position="1064"/>
        <end position="1077"/>
    </location>
</feature>
<feature type="disulfide bond" evidence="2">
    <location>
        <begin position="1080"/>
        <end position="1092"/>
    </location>
</feature>
<feature type="disulfide bond" evidence="2">
    <location>
        <begin position="1082"/>
        <end position="1099"/>
    </location>
</feature>
<feature type="disulfide bond" evidence="2">
    <location>
        <begin position="1101"/>
        <end position="1110"/>
    </location>
</feature>
<feature type="disulfide bond" evidence="2">
    <location>
        <begin position="1113"/>
        <end position="1125"/>
    </location>
</feature>
<feature type="disulfide bond" evidence="2">
    <location>
        <begin position="1128"/>
        <end position="1140"/>
    </location>
</feature>
<feature type="disulfide bond" evidence="2">
    <location>
        <begin position="1130"/>
        <end position="1147"/>
    </location>
</feature>
<feature type="disulfide bond" evidence="2">
    <location>
        <begin position="1149"/>
        <end position="1158"/>
    </location>
</feature>
<feature type="disulfide bond" evidence="2">
    <location>
        <begin position="1161"/>
        <end position="1172"/>
    </location>
</feature>
<feature type="disulfide bond" description="Interchain" evidence="7">
    <location>
        <position position="1175"/>
    </location>
</feature>
<feature type="disulfide bond" description="Interchain" evidence="7">
    <location>
        <position position="1178"/>
    </location>
</feature>
<feature type="disulfide bond" description="Interchain" evidence="7">
    <location>
        <position position="1759"/>
    </location>
</feature>
<feature type="splice variant" id="VSP_029913" description="In isoform 2." evidence="6">
    <original>LGLIPQINSLENFCSKQDLDEYQLHNCVEIASAMGPQVLPGACERLIISMSAKLHDGAVACKCH</original>
    <variation>AAVQWHNLGSLQPPPPECKQFSCFSFPSSWDYRHPPPHLASFCIFSRDGVSPHWPGWSRTPDLR</variation>
    <location>
        <begin position="709"/>
        <end position="772"/>
    </location>
</feature>
<feature type="splice variant" id="VSP_029914" description="In isoform 2." evidence="6">
    <location>
        <begin position="773"/>
        <end position="1761"/>
    </location>
</feature>
<feature type="splice variant" id="VSP_029915" description="In isoform 3." evidence="6">
    <original>DLERKIQD</original>
    <variation>GCFQNSAR</variation>
    <location>
        <begin position="1716"/>
        <end position="1723"/>
    </location>
</feature>
<feature type="splice variant" id="VSP_029916" description="In isoform 3." evidence="6">
    <location>
        <begin position="1724"/>
        <end position="1761"/>
    </location>
</feature>
<feature type="sequence variant" id="VAR_037588" description="In dbSNP:rs35644375.">
    <original>M</original>
    <variation>T</variation>
    <location>
        <position position="44"/>
    </location>
</feature>
<feature type="sequence variant" id="VAR_037589" description="In dbSNP:rs2074749.">
    <original>H</original>
    <variation>Y</variation>
    <location>
        <position position="234"/>
    </location>
</feature>
<feature type="sequence variant" id="VAR_037590" description="In dbSNP:rs9690688.">
    <original>V</original>
    <variation>F</variation>
    <location>
        <position position="591"/>
    </location>
</feature>
<feature type="sequence variant" id="VAR_037591" description="In dbSNP:rs2240445.">
    <original>N</original>
    <variation>S</variation>
    <location>
        <position position="866"/>
    </location>
</feature>
<feature type="sequence variant" id="VAR_074174" description="In dbSNP:rs1299564647." evidence="5">
    <original>G</original>
    <variation>C</variation>
    <location>
        <position position="1028"/>
    </location>
</feature>
<feature type="sequence variant" id="VAR_037592" description="In dbSNP:rs10260756.">
    <original>T</original>
    <variation>N</variation>
    <location>
        <position position="1350"/>
    </location>
</feature>
<feature type="sequence variant" id="VAR_037593" description="In dbSNP:rs1627354.">
    <original>H</original>
    <variation>Y</variation>
    <location>
        <position position="1510"/>
    </location>
</feature>
<feature type="sequence variant" id="VAR_037594" description="In dbSNP:rs2528693.">
    <original>R</original>
    <variation>S</variation>
    <location>
        <position position="1612"/>
    </location>
</feature>
<feature type="sequence conflict" description="In Ref. 1; AAC95123." evidence="7" ref="1">
    <original>F</original>
    <variation>S</variation>
    <location>
        <position position="70"/>
    </location>
</feature>
<feature type="sequence conflict" description="In Ref. 1; AAC95123." evidence="7" ref="1">
    <original>I</original>
    <variation>T</variation>
    <location>
        <position position="93"/>
    </location>
</feature>
<feature type="sequence conflict" description="In Ref. 1; AAC95123." evidence="7" ref="1">
    <original>L</original>
    <variation>S</variation>
    <location>
        <position position="1542"/>
    </location>
</feature>
<comment type="function">
    <text>Binding to cells via a high affinity receptor, laminin is thought to mediate the attachment, migration and organization of cells into tissues during embryonic development by interacting with other extracellular matrix components.</text>
</comment>
<comment type="subunit">
    <text>Laminin is a complex glycoprotein, consisting of three different polypeptide chains (alpha, beta, gamma), which are bound to each other by disulfide bonds into a cross-shaped molecule comprising one long and three short arms with globules at each end.</text>
</comment>
<comment type="subcellular location">
    <subcellularLocation>
        <location>Secreted</location>
        <location>Extracellular space</location>
        <location>Extracellular matrix</location>
        <location>Basement membrane</location>
    </subcellularLocation>
</comment>
<comment type="alternative products">
    <event type="alternative splicing"/>
    <isoform>
        <id>A4D0S4-1</id>
        <name>1</name>
        <sequence type="displayed"/>
    </isoform>
    <isoform>
        <id>A4D0S4-2</id>
        <name>2</name>
        <sequence type="described" ref="VSP_029913 VSP_029914"/>
    </isoform>
    <isoform>
        <id>A4D0S4-3</id>
        <name>3</name>
        <sequence type="described" ref="VSP_029915 VSP_029916"/>
    </isoform>
</comment>
<comment type="domain">
    <text>The alpha-helical domains I and II are thought to interact with other laminin chains to form a coiled coil structure.</text>
</comment>
<comment type="domain">
    <text>Domains VI and IV are globular.</text>
</comment>
<accession>A4D0S4</accession>
<accession>A5PKU6</accession>
<accession>B2RTT3</accession>
<accession>B5MEB9</accession>
<accession>Q86TP7</accession>
<accession>Q86XN2</accession>
<accession>Q8NBX5</accession>
<reference key="1">
    <citation type="submission" date="1997-10" db="EMBL/GenBank/DDBJ databases">
        <title>Cloning and characterization of the human laminin beta-4 chain.</title>
        <authorList>
            <person name="Olson P.F."/>
            <person name="Koch M."/>
            <person name="Champliaud M.F."/>
            <person name="Rowland K."/>
            <person name="Jin W."/>
            <person name="Burgeson R.E."/>
        </authorList>
    </citation>
    <scope>NUCLEOTIDE SEQUENCE [MRNA] (ISOFORM 1)</scope>
    <source>
        <tissue>Placenta</tissue>
    </source>
</reference>
<reference key="2">
    <citation type="journal article" date="2003" name="Nature">
        <title>The DNA sequence of human chromosome 7.</title>
        <authorList>
            <person name="Hillier L.W."/>
            <person name="Fulton R.S."/>
            <person name="Fulton L.A."/>
            <person name="Graves T.A."/>
            <person name="Pepin K.H."/>
            <person name="Wagner-McPherson C."/>
            <person name="Layman D."/>
            <person name="Maas J."/>
            <person name="Jaeger S."/>
            <person name="Walker R."/>
            <person name="Wylie K."/>
            <person name="Sekhon M."/>
            <person name="Becker M.C."/>
            <person name="O'Laughlin M.D."/>
            <person name="Schaller M.E."/>
            <person name="Fewell G.A."/>
            <person name="Delehaunty K.D."/>
            <person name="Miner T.L."/>
            <person name="Nash W.E."/>
            <person name="Cordes M."/>
            <person name="Du H."/>
            <person name="Sun H."/>
            <person name="Edwards J."/>
            <person name="Bradshaw-Cordum H."/>
            <person name="Ali J."/>
            <person name="Andrews S."/>
            <person name="Isak A."/>
            <person name="Vanbrunt A."/>
            <person name="Nguyen C."/>
            <person name="Du F."/>
            <person name="Lamar B."/>
            <person name="Courtney L."/>
            <person name="Kalicki J."/>
            <person name="Ozersky P."/>
            <person name="Bielicki L."/>
            <person name="Scott K."/>
            <person name="Holmes A."/>
            <person name="Harkins R."/>
            <person name="Harris A."/>
            <person name="Strong C.M."/>
            <person name="Hou S."/>
            <person name="Tomlinson C."/>
            <person name="Dauphin-Kohlberg S."/>
            <person name="Kozlowicz-Reilly A."/>
            <person name="Leonard S."/>
            <person name="Rohlfing T."/>
            <person name="Rock S.M."/>
            <person name="Tin-Wollam A.-M."/>
            <person name="Abbott A."/>
            <person name="Minx P."/>
            <person name="Maupin R."/>
            <person name="Strowmatt C."/>
            <person name="Latreille P."/>
            <person name="Miller N."/>
            <person name="Johnson D."/>
            <person name="Murray J."/>
            <person name="Woessner J.P."/>
            <person name="Wendl M.C."/>
            <person name="Yang S.-P."/>
            <person name="Schultz B.R."/>
            <person name="Wallis J.W."/>
            <person name="Spieth J."/>
            <person name="Bieri T.A."/>
            <person name="Nelson J.O."/>
            <person name="Berkowicz N."/>
            <person name="Wohldmann P.E."/>
            <person name="Cook L.L."/>
            <person name="Hickenbotham M.T."/>
            <person name="Eldred J."/>
            <person name="Williams D."/>
            <person name="Bedell J.A."/>
            <person name="Mardis E.R."/>
            <person name="Clifton S.W."/>
            <person name="Chissoe S.L."/>
            <person name="Marra M.A."/>
            <person name="Raymond C."/>
            <person name="Haugen E."/>
            <person name="Gillett W."/>
            <person name="Zhou Y."/>
            <person name="James R."/>
            <person name="Phelps K."/>
            <person name="Iadanoto S."/>
            <person name="Bubb K."/>
            <person name="Simms E."/>
            <person name="Levy R."/>
            <person name="Clendenning J."/>
            <person name="Kaul R."/>
            <person name="Kent W.J."/>
            <person name="Furey T.S."/>
            <person name="Baertsch R.A."/>
            <person name="Brent M.R."/>
            <person name="Keibler E."/>
            <person name="Flicek P."/>
            <person name="Bork P."/>
            <person name="Suyama M."/>
            <person name="Bailey J.A."/>
            <person name="Portnoy M.E."/>
            <person name="Torrents D."/>
            <person name="Chinwalla A.T."/>
            <person name="Gish W.R."/>
            <person name="Eddy S.R."/>
            <person name="McPherson J.D."/>
            <person name="Olson M.V."/>
            <person name="Eichler E.E."/>
            <person name="Green E.D."/>
            <person name="Waterston R.H."/>
            <person name="Wilson R.K."/>
        </authorList>
    </citation>
    <scope>NUCLEOTIDE SEQUENCE [LARGE SCALE GENOMIC DNA]</scope>
</reference>
<reference key="3">
    <citation type="submission" date="2004-06" db="EMBL/GenBank/DDBJ databases">
        <authorList>
            <person name="Mural R.J."/>
            <person name="Istrail S."/>
            <person name="Sutton G.G."/>
            <person name="Florea L."/>
            <person name="Halpern A.L."/>
            <person name="Mobarry C.M."/>
            <person name="Lippert R."/>
            <person name="Walenz B."/>
            <person name="Shatkay H."/>
            <person name="Dew I."/>
            <person name="Miller J.R."/>
            <person name="Flanigan M.J."/>
            <person name="Edwards N.J."/>
            <person name="Bolanos R."/>
            <person name="Fasulo D."/>
            <person name="Halldorsson B.V."/>
            <person name="Hannenhalli S."/>
            <person name="Turner R."/>
            <person name="Yooseph S."/>
            <person name="Lu F."/>
            <person name="Nusskern D.R."/>
            <person name="Shue B.C."/>
            <person name="Zheng X.H."/>
            <person name="Zhong F."/>
            <person name="Delcher A.L."/>
            <person name="Huson D.H."/>
            <person name="Kravitz S.A."/>
            <person name="Mouchard L."/>
            <person name="Reinert K."/>
            <person name="Remington K.A."/>
            <person name="Clark A.G."/>
            <person name="Waterman M.S."/>
            <person name="Eichler E.E."/>
            <person name="Adams M.D."/>
            <person name="Hunkapiller M.W."/>
            <person name="Myers E.W."/>
            <person name="Venter J.C."/>
        </authorList>
    </citation>
    <scope>NUCLEOTIDE SEQUENCE [LARGE SCALE GENOMIC DNA]</scope>
</reference>
<reference key="4">
    <citation type="journal article" date="2004" name="Genome Res.">
        <title>The status, quality, and expansion of the NIH full-length cDNA project: the Mammalian Gene Collection (MGC).</title>
        <authorList>
            <consortium name="The MGC Project Team"/>
        </authorList>
    </citation>
    <scope>NUCLEOTIDE SEQUENCE [LARGE SCALE MRNA] (ISOFORMS 1 AND 2)</scope>
    <scope>NUCLEOTIDE SEQUENCE [LARGE SCALE MRNA] OF 975-1761 (ISOFORM 3)</scope>
    <source>
        <tissue>Testis</tissue>
    </source>
</reference>
<reference key="5">
    <citation type="journal article" date="2004" name="Nat. Genet.">
        <title>Complete sequencing and characterization of 21,243 full-length human cDNAs.</title>
        <authorList>
            <person name="Ota T."/>
            <person name="Suzuki Y."/>
            <person name="Nishikawa T."/>
            <person name="Otsuki T."/>
            <person name="Sugiyama T."/>
            <person name="Irie R."/>
            <person name="Wakamatsu A."/>
            <person name="Hayashi K."/>
            <person name="Sato H."/>
            <person name="Nagai K."/>
            <person name="Kimura K."/>
            <person name="Makita H."/>
            <person name="Sekine M."/>
            <person name="Obayashi M."/>
            <person name="Nishi T."/>
            <person name="Shibahara T."/>
            <person name="Tanaka T."/>
            <person name="Ishii S."/>
            <person name="Yamamoto J."/>
            <person name="Saito K."/>
            <person name="Kawai Y."/>
            <person name="Isono Y."/>
            <person name="Nakamura Y."/>
            <person name="Nagahari K."/>
            <person name="Murakami K."/>
            <person name="Yasuda T."/>
            <person name="Iwayanagi T."/>
            <person name="Wagatsuma M."/>
            <person name="Shiratori A."/>
            <person name="Sudo H."/>
            <person name="Hosoiri T."/>
            <person name="Kaku Y."/>
            <person name="Kodaira H."/>
            <person name="Kondo H."/>
            <person name="Sugawara M."/>
            <person name="Takahashi M."/>
            <person name="Kanda K."/>
            <person name="Yokoi T."/>
            <person name="Furuya T."/>
            <person name="Kikkawa E."/>
            <person name="Omura Y."/>
            <person name="Abe K."/>
            <person name="Kamihara K."/>
            <person name="Katsuta N."/>
            <person name="Sato K."/>
            <person name="Tanikawa M."/>
            <person name="Yamazaki M."/>
            <person name="Ninomiya K."/>
            <person name="Ishibashi T."/>
            <person name="Yamashita H."/>
            <person name="Murakawa K."/>
            <person name="Fujimori K."/>
            <person name="Tanai H."/>
            <person name="Kimata M."/>
            <person name="Watanabe M."/>
            <person name="Hiraoka S."/>
            <person name="Chiba Y."/>
            <person name="Ishida S."/>
            <person name="Ono Y."/>
            <person name="Takiguchi S."/>
            <person name="Watanabe S."/>
            <person name="Yosida M."/>
            <person name="Hotuta T."/>
            <person name="Kusano J."/>
            <person name="Kanehori K."/>
            <person name="Takahashi-Fujii A."/>
            <person name="Hara H."/>
            <person name="Tanase T.-O."/>
            <person name="Nomura Y."/>
            <person name="Togiya S."/>
            <person name="Komai F."/>
            <person name="Hara R."/>
            <person name="Takeuchi K."/>
            <person name="Arita M."/>
            <person name="Imose N."/>
            <person name="Musashino K."/>
            <person name="Yuuki H."/>
            <person name="Oshima A."/>
            <person name="Sasaki N."/>
            <person name="Aotsuka S."/>
            <person name="Yoshikawa Y."/>
            <person name="Matsunawa H."/>
            <person name="Ichihara T."/>
            <person name="Shiohata N."/>
            <person name="Sano S."/>
            <person name="Moriya S."/>
            <person name="Momiyama H."/>
            <person name="Satoh N."/>
            <person name="Takami S."/>
            <person name="Terashima Y."/>
            <person name="Suzuki O."/>
            <person name="Nakagawa S."/>
            <person name="Senoh A."/>
            <person name="Mizoguchi H."/>
            <person name="Goto Y."/>
            <person name="Shimizu F."/>
            <person name="Wakebe H."/>
            <person name="Hishigaki H."/>
            <person name="Watanabe T."/>
            <person name="Sugiyama A."/>
            <person name="Takemoto M."/>
            <person name="Kawakami B."/>
            <person name="Yamazaki M."/>
            <person name="Watanabe K."/>
            <person name="Kumagai A."/>
            <person name="Itakura S."/>
            <person name="Fukuzumi Y."/>
            <person name="Fujimori Y."/>
            <person name="Komiyama M."/>
            <person name="Tashiro H."/>
            <person name="Tanigami A."/>
            <person name="Fujiwara T."/>
            <person name="Ono T."/>
            <person name="Yamada K."/>
            <person name="Fujii Y."/>
            <person name="Ozaki K."/>
            <person name="Hirao M."/>
            <person name="Ohmori Y."/>
            <person name="Kawabata A."/>
            <person name="Hikiji T."/>
            <person name="Kobatake N."/>
            <person name="Inagaki H."/>
            <person name="Ikema Y."/>
            <person name="Okamoto S."/>
            <person name="Okitani R."/>
            <person name="Kawakami T."/>
            <person name="Noguchi S."/>
            <person name="Itoh T."/>
            <person name="Shigeta K."/>
            <person name="Senba T."/>
            <person name="Matsumura K."/>
            <person name="Nakajima Y."/>
            <person name="Mizuno T."/>
            <person name="Morinaga M."/>
            <person name="Sasaki M."/>
            <person name="Togashi T."/>
            <person name="Oyama M."/>
            <person name="Hata H."/>
            <person name="Watanabe M."/>
            <person name="Komatsu T."/>
            <person name="Mizushima-Sugano J."/>
            <person name="Satoh T."/>
            <person name="Shirai Y."/>
            <person name="Takahashi Y."/>
            <person name="Nakagawa K."/>
            <person name="Okumura K."/>
            <person name="Nagase T."/>
            <person name="Nomura N."/>
            <person name="Kikuchi H."/>
            <person name="Masuho Y."/>
            <person name="Yamashita R."/>
            <person name="Nakai K."/>
            <person name="Yada T."/>
            <person name="Nakamura Y."/>
            <person name="Ohara O."/>
            <person name="Isogai T."/>
            <person name="Sugano S."/>
        </authorList>
    </citation>
    <scope>NUCLEOTIDE SEQUENCE [LARGE SCALE MRNA] OF 1528-1761 (ISOFORM 1)</scope>
    <source>
        <tissue>Placenta</tissue>
    </source>
</reference>
<reference key="6">
    <citation type="journal article" date="2015" name="Proc. Natl. Acad. Sci. U.S.A.">
        <title>Neomorphic effects of recurrent somatic mutations in Yin Yang 1 in insulin-producing adenomas.</title>
        <authorList>
            <person name="Cromer M.K."/>
            <person name="Choi M."/>
            <person name="Nelson-Williams C."/>
            <person name="Fonseca A.L."/>
            <person name="Kunstman J.W."/>
            <person name="Korah R.M."/>
            <person name="Overton J.D."/>
            <person name="Mane S."/>
            <person name="Kenney B."/>
            <person name="Malchoff C.D."/>
            <person name="Stalberg P."/>
            <person name="Akerstroem G."/>
            <person name="Westin G."/>
            <person name="Hellman P."/>
            <person name="Carling T."/>
            <person name="Bjoerklund P."/>
            <person name="Lifton R.P."/>
        </authorList>
    </citation>
    <scope>VARIANT CYS-1028</scope>
</reference>
<gene>
    <name type="primary">LAMB4</name>
</gene>
<evidence type="ECO:0000255" key="1"/>
<evidence type="ECO:0000255" key="2">
    <source>
        <dbReference type="PROSITE-ProRule" id="PRU00460"/>
    </source>
</evidence>
<evidence type="ECO:0000255" key="3">
    <source>
        <dbReference type="PROSITE-ProRule" id="PRU00462"/>
    </source>
</evidence>
<evidence type="ECO:0000255" key="4">
    <source>
        <dbReference type="PROSITE-ProRule" id="PRU00466"/>
    </source>
</evidence>
<evidence type="ECO:0000269" key="5">
    <source>
    </source>
</evidence>
<evidence type="ECO:0000303" key="6">
    <source>
    </source>
</evidence>
<evidence type="ECO:0000305" key="7"/>
<dbReference type="EMBL" id="AF028816">
    <property type="protein sequence ID" value="AAC95123.1"/>
    <property type="molecule type" value="mRNA"/>
</dbReference>
<dbReference type="EMBL" id="AC005048">
    <property type="status" value="NOT_ANNOTATED_CDS"/>
    <property type="molecule type" value="Genomic_DNA"/>
</dbReference>
<dbReference type="EMBL" id="CH236947">
    <property type="protein sequence ID" value="EAL24387.1"/>
    <property type="molecule type" value="Genomic_DNA"/>
</dbReference>
<dbReference type="EMBL" id="BC045172">
    <property type="protein sequence ID" value="AAH45172.2"/>
    <property type="molecule type" value="mRNA"/>
</dbReference>
<dbReference type="EMBL" id="BC140804">
    <property type="protein sequence ID" value="AAI40805.1"/>
    <property type="molecule type" value="mRNA"/>
</dbReference>
<dbReference type="EMBL" id="BC142619">
    <property type="protein sequence ID" value="AAI42620.1"/>
    <property type="molecule type" value="mRNA"/>
</dbReference>
<dbReference type="EMBL" id="AK075165">
    <property type="status" value="NOT_ANNOTATED_CDS"/>
    <property type="molecule type" value="mRNA"/>
</dbReference>
<dbReference type="CCDS" id="CCDS34732.1">
    <molecule id="A4D0S4-1"/>
</dbReference>
<dbReference type="CCDS" id="CCDS83218.1">
    <molecule id="A4D0S4-2"/>
</dbReference>
<dbReference type="RefSeq" id="NP_001304975.1">
    <molecule id="A4D0S4-1"/>
    <property type="nucleotide sequence ID" value="NM_001318046.2"/>
</dbReference>
<dbReference type="RefSeq" id="NP_001304977.1">
    <property type="nucleotide sequence ID" value="NM_001318048.1"/>
</dbReference>
<dbReference type="RefSeq" id="NP_031382.2">
    <molecule id="A4D0S4-1"/>
    <property type="nucleotide sequence ID" value="NM_007356.3"/>
</dbReference>
<dbReference type="RefSeq" id="XP_011514280.1">
    <molecule id="A4D0S4-3"/>
    <property type="nucleotide sequence ID" value="XM_011515978.2"/>
</dbReference>
<dbReference type="RefSeq" id="XP_054213605.1">
    <molecule id="A4D0S4-3"/>
    <property type="nucleotide sequence ID" value="XM_054357630.1"/>
</dbReference>
<dbReference type="SMR" id="A4D0S4"/>
<dbReference type="BioGRID" id="116479">
    <property type="interactions" value="4"/>
</dbReference>
<dbReference type="FunCoup" id="A4D0S4">
    <property type="interactions" value="475"/>
</dbReference>
<dbReference type="IntAct" id="A4D0S4">
    <property type="interactions" value="1"/>
</dbReference>
<dbReference type="STRING" id="9606.ENSP00000373433"/>
<dbReference type="ChEMBL" id="CHEMBL2364187"/>
<dbReference type="GlyCosmos" id="A4D0S4">
    <property type="glycosylation" value="16 sites, No reported glycans"/>
</dbReference>
<dbReference type="GlyGen" id="A4D0S4">
    <property type="glycosylation" value="16 sites, 2 N-linked glycans (2 sites)"/>
</dbReference>
<dbReference type="iPTMnet" id="A4D0S4"/>
<dbReference type="PhosphoSitePlus" id="A4D0S4"/>
<dbReference type="BioMuta" id="LAMB4"/>
<dbReference type="jPOST" id="A4D0S4"/>
<dbReference type="MassIVE" id="A4D0S4"/>
<dbReference type="PaxDb" id="9606-ENSP00000373433"/>
<dbReference type="PeptideAtlas" id="A4D0S4"/>
<dbReference type="ProteomicsDB" id="592">
    <molecule id="A4D0S4-1"/>
</dbReference>
<dbReference type="ProteomicsDB" id="593">
    <molecule id="A4D0S4-2"/>
</dbReference>
<dbReference type="ProteomicsDB" id="594">
    <molecule id="A4D0S4-3"/>
</dbReference>
<dbReference type="Antibodypedia" id="62084">
    <property type="antibodies" value="29 antibodies from 11 providers"/>
</dbReference>
<dbReference type="DNASU" id="22798"/>
<dbReference type="Ensembl" id="ENST00000205386.8">
    <molecule id="A4D0S4-1"/>
    <property type="protein sequence ID" value="ENSP00000205386.4"/>
    <property type="gene ID" value="ENSG00000091128.13"/>
</dbReference>
<dbReference type="Ensembl" id="ENST00000388781.8">
    <molecule id="A4D0S4-1"/>
    <property type="protein sequence ID" value="ENSP00000373433.3"/>
    <property type="gene ID" value="ENSG00000091128.13"/>
</dbReference>
<dbReference type="GeneID" id="22798"/>
<dbReference type="KEGG" id="hsa:22798"/>
<dbReference type="MANE-Select" id="ENST00000388781.8">
    <property type="protein sequence ID" value="ENSP00000373433.3"/>
    <property type="RefSeq nucleotide sequence ID" value="NM_007356.3"/>
    <property type="RefSeq protein sequence ID" value="NP_031382.2"/>
</dbReference>
<dbReference type="UCSC" id="uc003vey.3">
    <molecule id="A4D0S4-1"/>
    <property type="organism name" value="human"/>
</dbReference>
<dbReference type="AGR" id="HGNC:6491"/>
<dbReference type="CTD" id="22798"/>
<dbReference type="DisGeNET" id="22798"/>
<dbReference type="GeneCards" id="LAMB4"/>
<dbReference type="HGNC" id="HGNC:6491">
    <property type="gene designation" value="LAMB4"/>
</dbReference>
<dbReference type="HPA" id="ENSG00000091128">
    <property type="expression patterns" value="Tissue enriched (skin)"/>
</dbReference>
<dbReference type="MIM" id="616380">
    <property type="type" value="gene"/>
</dbReference>
<dbReference type="neXtProt" id="NX_A4D0S4"/>
<dbReference type="OpenTargets" id="ENSG00000091128"/>
<dbReference type="PharmGKB" id="PA30279"/>
<dbReference type="VEuPathDB" id="HostDB:ENSG00000091128"/>
<dbReference type="eggNOG" id="KOG0994">
    <property type="taxonomic scope" value="Eukaryota"/>
</dbReference>
<dbReference type="GeneTree" id="ENSGT00940000162514"/>
<dbReference type="HOGENOM" id="CLU_001560_1_0_1"/>
<dbReference type="InParanoid" id="A4D0S4"/>
<dbReference type="OMA" id="RRCSCHP"/>
<dbReference type="OrthoDB" id="5985440at2759"/>
<dbReference type="PAN-GO" id="A4D0S4">
    <property type="GO annotations" value="7 GO annotations based on evolutionary models"/>
</dbReference>
<dbReference type="PhylomeDB" id="A4D0S4"/>
<dbReference type="TreeFam" id="TF312903"/>
<dbReference type="PathwayCommons" id="A4D0S4"/>
<dbReference type="SignaLink" id="A4D0S4"/>
<dbReference type="BioGRID-ORCS" id="22798">
    <property type="hits" value="22 hits in 1144 CRISPR screens"/>
</dbReference>
<dbReference type="ChiTaRS" id="LAMB4">
    <property type="organism name" value="human"/>
</dbReference>
<dbReference type="GenomeRNAi" id="22798"/>
<dbReference type="Pharos" id="A4D0S4">
    <property type="development level" value="Tbio"/>
</dbReference>
<dbReference type="PRO" id="PR:A4D0S4"/>
<dbReference type="Proteomes" id="UP000005640">
    <property type="component" value="Chromosome 7"/>
</dbReference>
<dbReference type="RNAct" id="A4D0S4">
    <property type="molecule type" value="protein"/>
</dbReference>
<dbReference type="Bgee" id="ENSG00000091128">
    <property type="expression patterns" value="Expressed in skin of abdomen and 113 other cell types or tissues"/>
</dbReference>
<dbReference type="ExpressionAtlas" id="A4D0S4">
    <property type="expression patterns" value="baseline and differential"/>
</dbReference>
<dbReference type="GO" id="GO:0005604">
    <property type="term" value="C:basement membrane"/>
    <property type="evidence" value="ECO:0007669"/>
    <property type="project" value="UniProtKB-SubCell"/>
</dbReference>
<dbReference type="GO" id="GO:0005576">
    <property type="term" value="C:extracellular region"/>
    <property type="evidence" value="ECO:0007669"/>
    <property type="project" value="UniProtKB-KW"/>
</dbReference>
<dbReference type="GO" id="GO:0007155">
    <property type="term" value="P:cell adhesion"/>
    <property type="evidence" value="ECO:0007669"/>
    <property type="project" value="UniProtKB-KW"/>
</dbReference>
<dbReference type="CDD" id="cd22301">
    <property type="entry name" value="cc_LAMB4_C"/>
    <property type="match status" value="1"/>
</dbReference>
<dbReference type="CDD" id="cd00055">
    <property type="entry name" value="EGF_Lam"/>
    <property type="match status" value="12"/>
</dbReference>
<dbReference type="FunFam" id="2.10.25.10:FF:000011">
    <property type="entry name" value="Cadherin EGF LAG seven-pass G-type receptor"/>
    <property type="match status" value="1"/>
</dbReference>
<dbReference type="FunFam" id="2.10.25.10:FF:000084">
    <property type="entry name" value="Laminin subunit alpha 3"/>
    <property type="match status" value="1"/>
</dbReference>
<dbReference type="FunFam" id="2.10.25.10:FF:000209">
    <property type="entry name" value="Laminin subunit alpha 5"/>
    <property type="match status" value="1"/>
</dbReference>
<dbReference type="FunFam" id="2.10.25.10:FF:000065">
    <property type="entry name" value="Laminin subunit beta 1"/>
    <property type="match status" value="1"/>
</dbReference>
<dbReference type="FunFam" id="2.10.25.10:FF:000101">
    <property type="entry name" value="Laminin subunit beta 1"/>
    <property type="match status" value="1"/>
</dbReference>
<dbReference type="FunFam" id="2.10.25.10:FF:000130">
    <property type="entry name" value="Laminin subunit beta 1"/>
    <property type="match status" value="1"/>
</dbReference>
<dbReference type="FunFam" id="2.10.25.10:FF:000138">
    <property type="entry name" value="Laminin subunit beta 1"/>
    <property type="match status" value="1"/>
</dbReference>
<dbReference type="FunFam" id="2.170.300.10:FF:000004">
    <property type="entry name" value="Laminin subunit beta 1"/>
    <property type="match status" value="1"/>
</dbReference>
<dbReference type="FunFam" id="2.60.120.260:FF:000010">
    <property type="entry name" value="Laminin subunit beta 1"/>
    <property type="match status" value="1"/>
</dbReference>
<dbReference type="FunFam" id="2.10.25.10:FF:000135">
    <property type="entry name" value="Laminin subunit beta 4"/>
    <property type="match status" value="2"/>
</dbReference>
<dbReference type="FunFam" id="2.10.25.10:FF:000280">
    <property type="entry name" value="Laminin subunit beta 4"/>
    <property type="match status" value="1"/>
</dbReference>
<dbReference type="FunFam" id="2.10.25.10:FF:000608">
    <property type="entry name" value="Laminin subunit beta 4"/>
    <property type="match status" value="1"/>
</dbReference>
<dbReference type="FunFam" id="2.170.300.10:FF:000001">
    <property type="entry name" value="Laminin subunit beta-1"/>
    <property type="match status" value="1"/>
</dbReference>
<dbReference type="FunFam" id="2.10.25.10:FF:000333">
    <property type="entry name" value="netrin-4 isoform X2"/>
    <property type="match status" value="1"/>
</dbReference>
<dbReference type="Gene3D" id="2.60.120.260">
    <property type="entry name" value="Galactose-binding domain-like"/>
    <property type="match status" value="1"/>
</dbReference>
<dbReference type="Gene3D" id="2.10.25.10">
    <property type="entry name" value="Laminin"/>
    <property type="match status" value="11"/>
</dbReference>
<dbReference type="Gene3D" id="2.170.300.10">
    <property type="entry name" value="Tie2 ligand-binding domain superfamily"/>
    <property type="match status" value="1"/>
</dbReference>
<dbReference type="InterPro" id="IPR056558">
    <property type="entry name" value="LAMB1-4_helical"/>
</dbReference>
<dbReference type="InterPro" id="IPR056860">
    <property type="entry name" value="LAMB4_dom"/>
</dbReference>
<dbReference type="InterPro" id="IPR050440">
    <property type="entry name" value="Laminin/Netrin_ECM"/>
</dbReference>
<dbReference type="InterPro" id="IPR013015">
    <property type="entry name" value="Laminin_IV_B"/>
</dbReference>
<dbReference type="InterPro" id="IPR008211">
    <property type="entry name" value="Laminin_N"/>
</dbReference>
<dbReference type="InterPro" id="IPR002049">
    <property type="entry name" value="LE_dom"/>
</dbReference>
<dbReference type="InterPro" id="IPR056863">
    <property type="entry name" value="LMN_ATRN_NET-like_EGF"/>
</dbReference>
<dbReference type="PANTHER" id="PTHR10574:SF375">
    <property type="entry name" value="LAMININ SUBUNIT BETA-1"/>
    <property type="match status" value="1"/>
</dbReference>
<dbReference type="PANTHER" id="PTHR10574">
    <property type="entry name" value="NETRIN/LAMININ-RELATED"/>
    <property type="match status" value="1"/>
</dbReference>
<dbReference type="Pfam" id="PF00053">
    <property type="entry name" value="EGF_laminin"/>
    <property type="match status" value="11"/>
</dbReference>
<dbReference type="Pfam" id="PF24973">
    <property type="entry name" value="EGF_LMN_ATRN"/>
    <property type="match status" value="1"/>
</dbReference>
<dbReference type="Pfam" id="PF23219">
    <property type="entry name" value="LAMB1"/>
    <property type="match status" value="1"/>
</dbReference>
<dbReference type="Pfam" id="PF24999">
    <property type="entry name" value="LAMB4"/>
    <property type="match status" value="1"/>
</dbReference>
<dbReference type="Pfam" id="PF21199">
    <property type="entry name" value="LAMININ_IV_B"/>
    <property type="match status" value="1"/>
</dbReference>
<dbReference type="Pfam" id="PF00055">
    <property type="entry name" value="Laminin_N"/>
    <property type="match status" value="1"/>
</dbReference>
<dbReference type="PRINTS" id="PR00011">
    <property type="entry name" value="EGFLAMININ"/>
</dbReference>
<dbReference type="SMART" id="SM00180">
    <property type="entry name" value="EGF_Lam"/>
    <property type="match status" value="13"/>
</dbReference>
<dbReference type="SMART" id="SM00136">
    <property type="entry name" value="LamNT"/>
    <property type="match status" value="1"/>
</dbReference>
<dbReference type="SUPFAM" id="SSF57196">
    <property type="entry name" value="EGF/Laminin"/>
    <property type="match status" value="13"/>
</dbReference>
<dbReference type="PROSITE" id="PS00022">
    <property type="entry name" value="EGF_1"/>
    <property type="match status" value="10"/>
</dbReference>
<dbReference type="PROSITE" id="PS01186">
    <property type="entry name" value="EGF_2"/>
    <property type="match status" value="2"/>
</dbReference>
<dbReference type="PROSITE" id="PS01248">
    <property type="entry name" value="EGF_LAM_1"/>
    <property type="match status" value="11"/>
</dbReference>
<dbReference type="PROSITE" id="PS50027">
    <property type="entry name" value="EGF_LAM_2"/>
    <property type="match status" value="13"/>
</dbReference>
<dbReference type="PROSITE" id="PS51116">
    <property type="entry name" value="LAMININ_IVB"/>
    <property type="match status" value="1"/>
</dbReference>
<dbReference type="PROSITE" id="PS51117">
    <property type="entry name" value="LAMININ_NTER"/>
    <property type="match status" value="1"/>
</dbReference>